<keyword id="KW-0067">ATP-binding</keyword>
<keyword id="KW-0119">Carbohydrate metabolism</keyword>
<keyword id="KW-0294">Fucose metabolism</keyword>
<keyword id="KW-0418">Kinase</keyword>
<keyword id="KW-0547">Nucleotide-binding</keyword>
<keyword id="KW-1185">Reference proteome</keyword>
<keyword id="KW-0808">Transferase</keyword>
<sequence>MKQEVILVLDCGATNVRAIAVNRQGKIVARASTPNASDIAMENNTWHQWSLDAILQRFADCCRQINSELTECHIRGIAVTTFGVDGALVDKQGNLLYPIISWKCPRTAAVMDNIERLISAQRLQAISGVGAFSFNTLYKLVWLKENHPQLLERAHAWLFISSLINHRLTGEFTTDITMAGTSQMLDIQQRDFSPQILQATGIPRRLFPRLVEAGEQIGTLQNSAAAMLGLPVGIPVISAGHDTQFALFGAGAEQNEPVLSSGTWEILMVRSAQVDTSLLSQYAGSTCELDSQAGLYNPGMQWLASGVLEWVRKLFWTAETPWQMLIEEARLIAPGADGVKMQCDLLSCQNAGWQGVTLNTTRGHFYRAALEGLTAQLQRNLQMLEKIGHFKASELLLVGGGSRNTLWNQIKANMLDIPVKVLDDAETTVAGAALFGWYGVGEFNSPEEARAQIHYQYRYFYPQTEPEFIEEV</sequence>
<accession>P11553</accession>
<accession>Q2MA31</accession>
<comment type="function">
    <text evidence="1 2">Catalyzes the phosphorylation of L-fuculose. Can also phosphorylate, with lower efficiency, D-ribulose, D-xylulose and D-fructose.</text>
</comment>
<comment type="catalytic activity">
    <reaction evidence="1 2">
        <text>L-fuculose + ATP = L-fuculose 1-phosphate + ADP + H(+)</text>
        <dbReference type="Rhea" id="RHEA:12376"/>
        <dbReference type="ChEBI" id="CHEBI:15378"/>
        <dbReference type="ChEBI" id="CHEBI:17617"/>
        <dbReference type="ChEBI" id="CHEBI:30616"/>
        <dbReference type="ChEBI" id="CHEBI:57846"/>
        <dbReference type="ChEBI" id="CHEBI:456216"/>
        <dbReference type="EC" id="2.7.1.51"/>
    </reaction>
</comment>
<comment type="cofactor">
    <cofactor evidence="1 2">
        <name>a divalent metal cation</name>
        <dbReference type="ChEBI" id="CHEBI:60240"/>
    </cofactor>
</comment>
<comment type="biophysicochemical properties">
    <phDependence>
        <text evidence="2">Optimum pH is 7.8.</text>
    </phDependence>
</comment>
<comment type="pathway">
    <text evidence="1 2">Carbohydrate degradation; L-fucose degradation; L-lactaldehyde and glycerone phosphate from L-fucose: step 2/3.</text>
</comment>
<comment type="similarity">
    <text evidence="1">Belongs to the FGGY kinase family.</text>
</comment>
<comment type="caution">
    <text evidence="3 4">A 10-residue longer version of this protein (starting with the sequence MLSGYIAGAI) has been identified in strain W3110 (PubMed:9740056). Other evidence, including ribosomal profiling and comparison with other bacterial genera, suggests this protein actually starts on the indicated Met codon (PubMed:25078267).</text>
</comment>
<comment type="sequence caution" evidence="5">
    <conflict type="erroneous initiation">
        <sequence resource="EMBL-CDS" id="AAB40453"/>
    </conflict>
    <text>Extended N-terminus.</text>
</comment>
<comment type="sequence caution" evidence="5">
    <conflict type="erroneous initiation">
        <sequence resource="EMBL-CDS" id="BAE76875"/>
    </conflict>
    <text>Extended N-terminus.</text>
</comment>
<comment type="sequence caution" evidence="5">
    <conflict type="erroneous initiation">
        <sequence resource="EMBL-CDS" id="CAA33128"/>
    </conflict>
    <text>Extended N-terminus.</text>
</comment>
<gene>
    <name evidence="1" type="primary">fucK</name>
    <name type="ordered locus">b2803</name>
    <name type="ordered locus">JW2774</name>
</gene>
<proteinExistence type="evidence at protein level"/>
<feature type="chain" id="PRO_0000059423" description="L-fuculokinase">
    <location>
        <begin position="1"/>
        <end position="472"/>
    </location>
</feature>
<reference key="1">
    <citation type="journal article" date="1989" name="Nucleic Acids Res.">
        <title>The nucleotide sequence of Escherichia coli genes for L-fucose dissimilation.</title>
        <authorList>
            <person name="Lu Z."/>
            <person name="Lin E.C.C."/>
        </authorList>
    </citation>
    <scope>NUCLEOTIDE SEQUENCE [GENOMIC DNA]</scope>
    <source>
        <strain>K12</strain>
    </source>
</reference>
<reference key="2">
    <citation type="journal article" date="1997" name="Science">
        <title>The complete genome sequence of Escherichia coli K-12.</title>
        <authorList>
            <person name="Blattner F.R."/>
            <person name="Plunkett G. III"/>
            <person name="Bloch C.A."/>
            <person name="Perna N.T."/>
            <person name="Burland V."/>
            <person name="Riley M."/>
            <person name="Collado-Vides J."/>
            <person name="Glasner J.D."/>
            <person name="Rode C.K."/>
            <person name="Mayhew G.F."/>
            <person name="Gregor J."/>
            <person name="Davis N.W."/>
            <person name="Kirkpatrick H.A."/>
            <person name="Goeden M.A."/>
            <person name="Rose D.J."/>
            <person name="Mau B."/>
            <person name="Shao Y."/>
        </authorList>
    </citation>
    <scope>NUCLEOTIDE SEQUENCE [LARGE SCALE GENOMIC DNA]</scope>
    <source>
        <strain>K12 / MG1655 / ATCC 47076</strain>
    </source>
</reference>
<reference key="3">
    <citation type="journal article" date="2006" name="Mol. Syst. Biol.">
        <title>Highly accurate genome sequences of Escherichia coli K-12 strains MG1655 and W3110.</title>
        <authorList>
            <person name="Hayashi K."/>
            <person name="Morooka N."/>
            <person name="Yamamoto Y."/>
            <person name="Fujita K."/>
            <person name="Isono K."/>
            <person name="Choi S."/>
            <person name="Ohtsubo E."/>
            <person name="Baba T."/>
            <person name="Wanner B.L."/>
            <person name="Mori H."/>
            <person name="Horiuchi T."/>
        </authorList>
    </citation>
    <scope>NUCLEOTIDE SEQUENCE [LARGE SCALE GENOMIC DNA]</scope>
    <source>
        <strain>K12 / W3110 / ATCC 27325 / DSM 5911</strain>
    </source>
</reference>
<reference key="4">
    <citation type="journal article" date="1998" name="Electrophoresis">
        <title>'98 Escherichia coli SWISS-2DPAGE database update.</title>
        <authorList>
            <person name="Tonella L."/>
            <person name="Walsh B.J."/>
            <person name="Sanchez J.-C."/>
            <person name="Ou K."/>
            <person name="Wilkins M.R."/>
            <person name="Tyler M."/>
            <person name="Frutiger S."/>
            <person name="Gooley A.A."/>
            <person name="Pescaru I."/>
            <person name="Appel R.D."/>
            <person name="Yan J.X."/>
            <person name="Bairoch A."/>
            <person name="Hoogland C."/>
            <person name="Morch F.S."/>
            <person name="Hughes G.J."/>
            <person name="Williams K.L."/>
            <person name="Hochstrasser D.F."/>
        </authorList>
    </citation>
    <scope>POSSIBLE START SITE</scope>
    <source>
        <strain>K12 / W3110 / ATCC 27325 / DSM 5911</strain>
    </source>
</reference>
<reference key="5">
    <citation type="journal article" date="1962" name="J. Biol. Chem.">
        <title>The metabolism of L-fucose. I. The purification and properties of L-fuculose kinase.</title>
        <authorList>
            <person name="Heath E.C."/>
            <person name="Ghalambor M.A."/>
        </authorList>
    </citation>
    <scope>FUNCTION</scope>
    <scope>CATALYTIC ACTIVITY</scope>
    <scope>COFACTOR</scope>
    <scope>BIOPHYSICOCHEMICAL PROPERTIES</scope>
    <scope>PATHWAY</scope>
    <source>
        <strain>O111:B4</strain>
    </source>
</reference>
<reference key="6">
    <citation type="journal article" date="2014" name="PLoS Genet.">
        <title>The coding and noncoding architecture of the Caulobacter crescentus genome.</title>
        <authorList>
            <person name="Schrader J.M."/>
            <person name="Zhou B."/>
            <person name="Li G.W."/>
            <person name="Lasker K."/>
            <person name="Childers W.S."/>
            <person name="Williams B."/>
            <person name="Long T."/>
            <person name="Crosson S."/>
            <person name="McAdams H.H."/>
            <person name="Weissman J.S."/>
            <person name="Shapiro L."/>
        </authorList>
    </citation>
    <scope>POSSIBLE START SITE</scope>
</reference>
<dbReference type="EC" id="2.7.1.51" evidence="1"/>
<dbReference type="EMBL" id="X15025">
    <property type="protein sequence ID" value="CAA33128.1"/>
    <property type="status" value="ALT_INIT"/>
    <property type="molecule type" value="Genomic_DNA"/>
</dbReference>
<dbReference type="EMBL" id="U29581">
    <property type="protein sequence ID" value="AAB40453.1"/>
    <property type="status" value="ALT_INIT"/>
    <property type="molecule type" value="Genomic_DNA"/>
</dbReference>
<dbReference type="EMBL" id="U00096">
    <property type="protein sequence ID" value="AAC75845.2"/>
    <property type="molecule type" value="Genomic_DNA"/>
</dbReference>
<dbReference type="EMBL" id="AP009048">
    <property type="protein sequence ID" value="BAE76875.1"/>
    <property type="status" value="ALT_INIT"/>
    <property type="molecule type" value="Genomic_DNA"/>
</dbReference>
<dbReference type="PIR" id="JS0186">
    <property type="entry name" value="KIECFK"/>
</dbReference>
<dbReference type="RefSeq" id="NP_417283.2">
    <property type="nucleotide sequence ID" value="NC_000913.3"/>
</dbReference>
<dbReference type="RefSeq" id="WP_000808392.1">
    <property type="nucleotide sequence ID" value="NZ_LN832404.1"/>
</dbReference>
<dbReference type="SMR" id="P11553"/>
<dbReference type="BioGRID" id="4259225">
    <property type="interactions" value="25"/>
</dbReference>
<dbReference type="BioGRID" id="850383">
    <property type="interactions" value="1"/>
</dbReference>
<dbReference type="DIP" id="DIP-9712N"/>
<dbReference type="FunCoup" id="P11553">
    <property type="interactions" value="86"/>
</dbReference>
<dbReference type="IntAct" id="P11553">
    <property type="interactions" value="4"/>
</dbReference>
<dbReference type="STRING" id="511145.b2803"/>
<dbReference type="PaxDb" id="511145-b2803"/>
<dbReference type="EnsemblBacteria" id="AAC75845">
    <property type="protein sequence ID" value="AAC75845"/>
    <property type="gene ID" value="b2803"/>
</dbReference>
<dbReference type="GeneID" id="75172887"/>
<dbReference type="GeneID" id="946022"/>
<dbReference type="KEGG" id="ecj:JW2774"/>
<dbReference type="KEGG" id="eco:b2803"/>
<dbReference type="KEGG" id="ecoc:C3026_15410"/>
<dbReference type="PATRIC" id="fig|511145.12.peg.2903"/>
<dbReference type="EchoBASE" id="EB0346"/>
<dbReference type="eggNOG" id="COG1070">
    <property type="taxonomic scope" value="Bacteria"/>
</dbReference>
<dbReference type="HOGENOM" id="CLU_009281_11_2_6"/>
<dbReference type="InParanoid" id="P11553"/>
<dbReference type="OrthoDB" id="9805576at2"/>
<dbReference type="PhylomeDB" id="P11553"/>
<dbReference type="BioCyc" id="EcoCyc:FUCULOKIN-MONOMER"/>
<dbReference type="BioCyc" id="MetaCyc:FUCULOKIN-MONOMER"/>
<dbReference type="UniPathway" id="UPA00563">
    <property type="reaction ID" value="UER00625"/>
</dbReference>
<dbReference type="PRO" id="PR:P11553"/>
<dbReference type="Proteomes" id="UP000000625">
    <property type="component" value="Chromosome"/>
</dbReference>
<dbReference type="GO" id="GO:0005829">
    <property type="term" value="C:cytosol"/>
    <property type="evidence" value="ECO:0000318"/>
    <property type="project" value="GO_Central"/>
</dbReference>
<dbReference type="GO" id="GO:0005524">
    <property type="term" value="F:ATP binding"/>
    <property type="evidence" value="ECO:0007669"/>
    <property type="project" value="UniProtKB-UniRule"/>
</dbReference>
<dbReference type="GO" id="GO:0004370">
    <property type="term" value="F:glycerol kinase activity"/>
    <property type="evidence" value="ECO:0000318"/>
    <property type="project" value="GO_Central"/>
</dbReference>
<dbReference type="GO" id="GO:0008737">
    <property type="term" value="F:L-fuculokinase activity"/>
    <property type="evidence" value="ECO:0000314"/>
    <property type="project" value="EcoCyc"/>
</dbReference>
<dbReference type="GO" id="GO:0019571">
    <property type="term" value="P:D-arabinose catabolic process"/>
    <property type="evidence" value="ECO:0000315"/>
    <property type="project" value="EcoCyc"/>
</dbReference>
<dbReference type="GO" id="GO:0042355">
    <property type="term" value="P:L-fucose catabolic process"/>
    <property type="evidence" value="ECO:0000315"/>
    <property type="project" value="EcoCyc"/>
</dbReference>
<dbReference type="GO" id="GO:0019301">
    <property type="term" value="P:rhamnose catabolic process"/>
    <property type="evidence" value="ECO:0000318"/>
    <property type="project" value="GO_Central"/>
</dbReference>
<dbReference type="CDD" id="cd07773">
    <property type="entry name" value="ASKHA_NBD_FGGY_FK"/>
    <property type="match status" value="1"/>
</dbReference>
<dbReference type="FunFam" id="3.30.420.40:FF:000159">
    <property type="entry name" value="L-fuculokinase"/>
    <property type="match status" value="1"/>
</dbReference>
<dbReference type="FunFam" id="3.30.420.40:FF:000161">
    <property type="entry name" value="L-fuculokinase"/>
    <property type="match status" value="1"/>
</dbReference>
<dbReference type="Gene3D" id="3.30.420.40">
    <property type="match status" value="2"/>
</dbReference>
<dbReference type="HAMAP" id="MF_00986">
    <property type="entry name" value="Fuculokinase"/>
    <property type="match status" value="1"/>
</dbReference>
<dbReference type="InterPro" id="IPR043129">
    <property type="entry name" value="ATPase_NBD"/>
</dbReference>
<dbReference type="InterPro" id="IPR000577">
    <property type="entry name" value="Carb_kinase_FGGY"/>
</dbReference>
<dbReference type="InterPro" id="IPR018483">
    <property type="entry name" value="Carb_kinase_FGGY_CS"/>
</dbReference>
<dbReference type="InterPro" id="IPR018485">
    <property type="entry name" value="FGGY_C"/>
</dbReference>
<dbReference type="InterPro" id="IPR050406">
    <property type="entry name" value="FGGY_Carb_Kinase"/>
</dbReference>
<dbReference type="InterPro" id="IPR018484">
    <property type="entry name" value="FGGY_N"/>
</dbReference>
<dbReference type="InterPro" id="IPR013450">
    <property type="entry name" value="Fuculokinase"/>
</dbReference>
<dbReference type="NCBIfam" id="TIGR02628">
    <property type="entry name" value="fuculo_kin_coli"/>
    <property type="match status" value="1"/>
</dbReference>
<dbReference type="PANTHER" id="PTHR43095">
    <property type="entry name" value="SUGAR KINASE"/>
    <property type="match status" value="1"/>
</dbReference>
<dbReference type="PANTHER" id="PTHR43095:SF5">
    <property type="entry name" value="XYLULOSE KINASE"/>
    <property type="match status" value="1"/>
</dbReference>
<dbReference type="Pfam" id="PF02782">
    <property type="entry name" value="FGGY_C"/>
    <property type="match status" value="1"/>
</dbReference>
<dbReference type="Pfam" id="PF00370">
    <property type="entry name" value="FGGY_N"/>
    <property type="match status" value="1"/>
</dbReference>
<dbReference type="PIRSF" id="PIRSF000538">
    <property type="entry name" value="GlpK"/>
    <property type="match status" value="1"/>
</dbReference>
<dbReference type="SUPFAM" id="SSF53067">
    <property type="entry name" value="Actin-like ATPase domain"/>
    <property type="match status" value="2"/>
</dbReference>
<dbReference type="PROSITE" id="PS00933">
    <property type="entry name" value="FGGY_KINASES_1"/>
    <property type="match status" value="1"/>
</dbReference>
<dbReference type="PROSITE" id="PS00445">
    <property type="entry name" value="FGGY_KINASES_2"/>
    <property type="match status" value="1"/>
</dbReference>
<protein>
    <recommendedName>
        <fullName evidence="1">L-fuculokinase</fullName>
        <ecNumber evidence="1">2.7.1.51</ecNumber>
    </recommendedName>
    <alternativeName>
        <fullName evidence="1">L-fuculose kinase</fullName>
    </alternativeName>
</protein>
<evidence type="ECO:0000255" key="1">
    <source>
        <dbReference type="HAMAP-Rule" id="MF_00986"/>
    </source>
</evidence>
<evidence type="ECO:0000269" key="2">
    <source>
    </source>
</evidence>
<evidence type="ECO:0000269" key="3">
    <source>
    </source>
</evidence>
<evidence type="ECO:0000269" key="4">
    <source>
    </source>
</evidence>
<evidence type="ECO:0000305" key="5"/>
<name>FUCK_ECOLI</name>
<organism>
    <name type="scientific">Escherichia coli (strain K12)</name>
    <dbReference type="NCBI Taxonomy" id="83333"/>
    <lineage>
        <taxon>Bacteria</taxon>
        <taxon>Pseudomonadati</taxon>
        <taxon>Pseudomonadota</taxon>
        <taxon>Gammaproteobacteria</taxon>
        <taxon>Enterobacterales</taxon>
        <taxon>Enterobacteriaceae</taxon>
        <taxon>Escherichia</taxon>
    </lineage>
</organism>